<reference key="1">
    <citation type="journal article" date="2009" name="BMC Genomics">
        <title>Analysis of the Rickettsia africae genome reveals that virulence acquisition in Rickettsia species may be explained by genome reduction.</title>
        <authorList>
            <person name="Fournier P.-E."/>
            <person name="El Karkouri K."/>
            <person name="Leroy Q."/>
            <person name="Robert C."/>
            <person name="Giumelli B."/>
            <person name="Renesto P."/>
            <person name="Socolovschi C."/>
            <person name="Parola P."/>
            <person name="Audic S."/>
            <person name="Raoult D."/>
        </authorList>
    </citation>
    <scope>NUCLEOTIDE SEQUENCE [LARGE SCALE GENOMIC DNA]</scope>
    <source>
        <strain>ESF-5</strain>
    </source>
</reference>
<accession>C3PLF4</accession>
<organism>
    <name type="scientific">Rickettsia africae (strain ESF-5)</name>
    <dbReference type="NCBI Taxonomy" id="347255"/>
    <lineage>
        <taxon>Bacteria</taxon>
        <taxon>Pseudomonadati</taxon>
        <taxon>Pseudomonadota</taxon>
        <taxon>Alphaproteobacteria</taxon>
        <taxon>Rickettsiales</taxon>
        <taxon>Rickettsiaceae</taxon>
        <taxon>Rickettsieae</taxon>
        <taxon>Rickettsia</taxon>
        <taxon>spotted fever group</taxon>
    </lineage>
</organism>
<comment type="function">
    <text evidence="1">Methyltransferase required for the conversion of demethylmenaquinol (DMKH2) to menaquinol (MKH2) and the conversion of 2-polyprenyl-6-methoxy-1,4-benzoquinol (DDMQH2) to 2-polyprenyl-3-methyl-6-methoxy-1,4-benzoquinol (DMQH2).</text>
</comment>
<comment type="catalytic activity">
    <reaction evidence="1">
        <text>a 2-demethylmenaquinol + S-adenosyl-L-methionine = a menaquinol + S-adenosyl-L-homocysteine + H(+)</text>
        <dbReference type="Rhea" id="RHEA:42640"/>
        <dbReference type="Rhea" id="RHEA-COMP:9539"/>
        <dbReference type="Rhea" id="RHEA-COMP:9563"/>
        <dbReference type="ChEBI" id="CHEBI:15378"/>
        <dbReference type="ChEBI" id="CHEBI:18151"/>
        <dbReference type="ChEBI" id="CHEBI:55437"/>
        <dbReference type="ChEBI" id="CHEBI:57856"/>
        <dbReference type="ChEBI" id="CHEBI:59789"/>
        <dbReference type="EC" id="2.1.1.163"/>
    </reaction>
</comment>
<comment type="catalytic activity">
    <reaction evidence="1">
        <text>a 2-methoxy-6-(all-trans-polyprenyl)benzene-1,4-diol + S-adenosyl-L-methionine = a 5-methoxy-2-methyl-3-(all-trans-polyprenyl)benzene-1,4-diol + S-adenosyl-L-homocysteine + H(+)</text>
        <dbReference type="Rhea" id="RHEA:28286"/>
        <dbReference type="Rhea" id="RHEA-COMP:10858"/>
        <dbReference type="Rhea" id="RHEA-COMP:10859"/>
        <dbReference type="ChEBI" id="CHEBI:15378"/>
        <dbReference type="ChEBI" id="CHEBI:57856"/>
        <dbReference type="ChEBI" id="CHEBI:59789"/>
        <dbReference type="ChEBI" id="CHEBI:84166"/>
        <dbReference type="ChEBI" id="CHEBI:84167"/>
        <dbReference type="EC" id="2.1.1.201"/>
    </reaction>
</comment>
<comment type="pathway">
    <text evidence="1">Quinol/quinone metabolism; menaquinone biosynthesis; menaquinol from 1,4-dihydroxy-2-naphthoate: step 2/2.</text>
</comment>
<comment type="pathway">
    <text evidence="1">Cofactor biosynthesis; ubiquinone biosynthesis.</text>
</comment>
<comment type="similarity">
    <text evidence="1">Belongs to the class I-like SAM-binding methyltransferase superfamily. MenG/UbiE family.</text>
</comment>
<evidence type="ECO:0000255" key="1">
    <source>
        <dbReference type="HAMAP-Rule" id="MF_01813"/>
    </source>
</evidence>
<feature type="chain" id="PRO_1000215990" description="Ubiquinone/menaquinone biosynthesis C-methyltransferase UbiE">
    <location>
        <begin position="1"/>
        <end position="248"/>
    </location>
</feature>
<feature type="binding site" evidence="1">
    <location>
        <position position="68"/>
    </location>
    <ligand>
        <name>S-adenosyl-L-methionine</name>
        <dbReference type="ChEBI" id="CHEBI:59789"/>
    </ligand>
</feature>
<feature type="binding site" evidence="1">
    <location>
        <position position="92"/>
    </location>
    <ligand>
        <name>S-adenosyl-L-methionine</name>
        <dbReference type="ChEBI" id="CHEBI:59789"/>
    </ligand>
</feature>
<sequence>MNQTNFGFKKVDYTKKQGLVNNVFSNVADKYDLMNDLMSLGLHRLWKDEFIRQIPNLNSHILDVASGSGDIALKLAKKARDRVNNISLTLSDINEEMLKQAKKKAIDLNLFQNLKFTVASAEELPFPDDSFDYYTIAFGIRNVPDINKALKEACRVLKPMGKFICLEFSKVKEGYIKDFYKFYSFNIIPSIGQMIAGNKEAYEYLVESIDLFPSQDEFRIMIKDAGFEEVGYKNLSGGIVAIHSAYTQ</sequence>
<name>UBIE_RICAE</name>
<keyword id="KW-0474">Menaquinone biosynthesis</keyword>
<keyword id="KW-0489">Methyltransferase</keyword>
<keyword id="KW-0949">S-adenosyl-L-methionine</keyword>
<keyword id="KW-0808">Transferase</keyword>
<keyword id="KW-0831">Ubiquinone biosynthesis</keyword>
<protein>
    <recommendedName>
        <fullName evidence="1">Ubiquinone/menaquinone biosynthesis C-methyltransferase UbiE</fullName>
        <ecNumber evidence="1">2.1.1.163</ecNumber>
        <ecNumber evidence="1">2.1.1.201</ecNumber>
    </recommendedName>
    <alternativeName>
        <fullName evidence="1">2-methoxy-6-polyprenyl-1,4-benzoquinol methylase</fullName>
    </alternativeName>
    <alternativeName>
        <fullName evidence="1">Demethylmenaquinone methyltransferase</fullName>
    </alternativeName>
</protein>
<proteinExistence type="inferred from homology"/>
<dbReference type="EC" id="2.1.1.163" evidence="1"/>
<dbReference type="EC" id="2.1.1.201" evidence="1"/>
<dbReference type="EMBL" id="CP001612">
    <property type="protein sequence ID" value="ACP53794.1"/>
    <property type="molecule type" value="Genomic_DNA"/>
</dbReference>
<dbReference type="RefSeq" id="WP_004997739.1">
    <property type="nucleotide sequence ID" value="NC_012633.1"/>
</dbReference>
<dbReference type="SMR" id="C3PLF4"/>
<dbReference type="GeneID" id="95361507"/>
<dbReference type="KEGG" id="raf:RAF_ORF0941"/>
<dbReference type="HOGENOM" id="CLU_037990_0_1_5"/>
<dbReference type="UniPathway" id="UPA00079">
    <property type="reaction ID" value="UER00169"/>
</dbReference>
<dbReference type="UniPathway" id="UPA00232"/>
<dbReference type="Proteomes" id="UP000002305">
    <property type="component" value="Chromosome"/>
</dbReference>
<dbReference type="GO" id="GO:0008425">
    <property type="term" value="F:2-methoxy-6-polyprenyl-1,4-benzoquinol methyltransferase activity"/>
    <property type="evidence" value="ECO:0007669"/>
    <property type="project" value="UniProtKB-UniRule"/>
</dbReference>
<dbReference type="GO" id="GO:0043770">
    <property type="term" value="F:demethylmenaquinone methyltransferase activity"/>
    <property type="evidence" value="ECO:0007669"/>
    <property type="project" value="UniProtKB-UniRule"/>
</dbReference>
<dbReference type="GO" id="GO:0009060">
    <property type="term" value="P:aerobic respiration"/>
    <property type="evidence" value="ECO:0007669"/>
    <property type="project" value="UniProtKB-UniRule"/>
</dbReference>
<dbReference type="GO" id="GO:0009234">
    <property type="term" value="P:menaquinone biosynthetic process"/>
    <property type="evidence" value="ECO:0007669"/>
    <property type="project" value="UniProtKB-UniRule"/>
</dbReference>
<dbReference type="GO" id="GO:0032259">
    <property type="term" value="P:methylation"/>
    <property type="evidence" value="ECO:0007669"/>
    <property type="project" value="UniProtKB-KW"/>
</dbReference>
<dbReference type="CDD" id="cd02440">
    <property type="entry name" value="AdoMet_MTases"/>
    <property type="match status" value="1"/>
</dbReference>
<dbReference type="FunFam" id="3.40.50.150:FF:000250">
    <property type="entry name" value="Ubiquinone/menaquinone biosynthesis C-methyltransferase UbiE"/>
    <property type="match status" value="1"/>
</dbReference>
<dbReference type="Gene3D" id="3.40.50.150">
    <property type="entry name" value="Vaccinia Virus protein VP39"/>
    <property type="match status" value="1"/>
</dbReference>
<dbReference type="HAMAP" id="MF_01813">
    <property type="entry name" value="MenG_UbiE_methyltr"/>
    <property type="match status" value="1"/>
</dbReference>
<dbReference type="InterPro" id="IPR029063">
    <property type="entry name" value="SAM-dependent_MTases_sf"/>
</dbReference>
<dbReference type="InterPro" id="IPR004033">
    <property type="entry name" value="UbiE/COQ5_MeTrFase"/>
</dbReference>
<dbReference type="InterPro" id="IPR023576">
    <property type="entry name" value="UbiE/COQ5_MeTrFase_CS"/>
</dbReference>
<dbReference type="NCBIfam" id="TIGR01934">
    <property type="entry name" value="MenG_MenH_UbiE"/>
    <property type="match status" value="1"/>
</dbReference>
<dbReference type="NCBIfam" id="NF001242">
    <property type="entry name" value="PRK00216.1-3"/>
    <property type="match status" value="1"/>
</dbReference>
<dbReference type="NCBIfam" id="NF001244">
    <property type="entry name" value="PRK00216.1-5"/>
    <property type="match status" value="1"/>
</dbReference>
<dbReference type="PANTHER" id="PTHR43591:SF24">
    <property type="entry name" value="2-METHOXY-6-POLYPRENYL-1,4-BENZOQUINOL METHYLASE, MITOCHONDRIAL"/>
    <property type="match status" value="1"/>
</dbReference>
<dbReference type="PANTHER" id="PTHR43591">
    <property type="entry name" value="METHYLTRANSFERASE"/>
    <property type="match status" value="1"/>
</dbReference>
<dbReference type="Pfam" id="PF01209">
    <property type="entry name" value="Ubie_methyltran"/>
    <property type="match status" value="1"/>
</dbReference>
<dbReference type="SUPFAM" id="SSF53335">
    <property type="entry name" value="S-adenosyl-L-methionine-dependent methyltransferases"/>
    <property type="match status" value="1"/>
</dbReference>
<dbReference type="PROSITE" id="PS51608">
    <property type="entry name" value="SAM_MT_UBIE"/>
    <property type="match status" value="1"/>
</dbReference>
<dbReference type="PROSITE" id="PS01183">
    <property type="entry name" value="UBIE_1"/>
    <property type="match status" value="1"/>
</dbReference>
<dbReference type="PROSITE" id="PS01184">
    <property type="entry name" value="UBIE_2"/>
    <property type="match status" value="1"/>
</dbReference>
<gene>
    <name evidence="1" type="primary">ubiE</name>
    <name type="ordered locus">RAF_ORF0941</name>
</gene>